<protein>
    <recommendedName>
        <fullName>High-potential iron-sulfur protein</fullName>
        <shortName>HiPIP</shortName>
    </recommendedName>
</protein>
<evidence type="ECO:0000255" key="1">
    <source>
        <dbReference type="PROSITE-ProRule" id="PRU00705"/>
    </source>
</evidence>
<evidence type="ECO:0000305" key="2"/>
<name>HIP1_RHOTE</name>
<proteinExistence type="evidence at protein level"/>
<feature type="chain" id="PRO_0000220427" description="High-potential iron-sulfur protein">
    <location>
        <begin position="1"/>
        <end position="63"/>
    </location>
</feature>
<feature type="binding site" evidence="1">
    <location>
        <position position="23"/>
    </location>
    <ligand>
        <name>[4Fe-4S] cluster</name>
        <dbReference type="ChEBI" id="CHEBI:49883"/>
    </ligand>
</feature>
<feature type="binding site" evidence="1">
    <location>
        <position position="26"/>
    </location>
    <ligand>
        <name>[4Fe-4S] cluster</name>
        <dbReference type="ChEBI" id="CHEBI:49883"/>
    </ligand>
</feature>
<feature type="binding site" evidence="1">
    <location>
        <position position="41"/>
    </location>
    <ligand>
        <name>[4Fe-4S] cluster</name>
        <dbReference type="ChEBI" id="CHEBI:49883"/>
    </ligand>
</feature>
<feature type="binding site" evidence="1">
    <location>
        <position position="56"/>
    </location>
    <ligand>
        <name>[4Fe-4S] cluster</name>
        <dbReference type="ChEBI" id="CHEBI:49883"/>
    </ligand>
</feature>
<feature type="unsure residue" description="D or N">
    <location>
        <position position="47"/>
    </location>
</feature>
<feature type="unsure residue" description="Q or E">
    <location>
        <position position="49"/>
    </location>
</feature>
<sequence>GTNASMRKAFNYQEVSKTAGKNCANCAQFIPGASASAAGACKVIPGDSQIQPTGYCDAYIVKK</sequence>
<keyword id="KW-0004">4Fe-4S</keyword>
<keyword id="KW-0903">Direct protein sequencing</keyword>
<keyword id="KW-0249">Electron transport</keyword>
<keyword id="KW-0408">Iron</keyword>
<keyword id="KW-0411">Iron-sulfur</keyword>
<keyword id="KW-0479">Metal-binding</keyword>
<keyword id="KW-0813">Transport</keyword>
<gene>
    <name type="primary">hip</name>
</gene>
<dbReference type="PIR" id="A00269">
    <property type="entry name" value="IHQFT"/>
</dbReference>
<dbReference type="SMR" id="P00266"/>
<dbReference type="GO" id="GO:0051539">
    <property type="term" value="F:4 iron, 4 sulfur cluster binding"/>
    <property type="evidence" value="ECO:0007669"/>
    <property type="project" value="UniProtKB-KW"/>
</dbReference>
<dbReference type="GO" id="GO:0009055">
    <property type="term" value="F:electron transfer activity"/>
    <property type="evidence" value="ECO:0007669"/>
    <property type="project" value="InterPro"/>
</dbReference>
<dbReference type="GO" id="GO:0046872">
    <property type="term" value="F:metal ion binding"/>
    <property type="evidence" value="ECO:0007669"/>
    <property type="project" value="UniProtKB-KW"/>
</dbReference>
<dbReference type="GO" id="GO:0019646">
    <property type="term" value="P:aerobic electron transport chain"/>
    <property type="evidence" value="ECO:0007669"/>
    <property type="project" value="InterPro"/>
</dbReference>
<dbReference type="Gene3D" id="4.10.490.10">
    <property type="entry name" value="High potential iron-sulphur protein"/>
    <property type="match status" value="1"/>
</dbReference>
<dbReference type="InterPro" id="IPR000170">
    <property type="entry name" value="High_potential_FeS_prot"/>
</dbReference>
<dbReference type="InterPro" id="IPR036369">
    <property type="entry name" value="HIPIP_sf"/>
</dbReference>
<dbReference type="Pfam" id="PF01355">
    <property type="entry name" value="HIPIP"/>
    <property type="match status" value="1"/>
</dbReference>
<dbReference type="SUPFAM" id="SSF57652">
    <property type="entry name" value="HIPIP (high potential iron protein)"/>
    <property type="match status" value="1"/>
</dbReference>
<dbReference type="PROSITE" id="PS51373">
    <property type="entry name" value="HIPIP"/>
    <property type="match status" value="1"/>
</dbReference>
<organism>
    <name type="scientific">Rhodocyclus tenuis</name>
    <name type="common">Rhodospirillum tenue</name>
    <dbReference type="NCBI Taxonomy" id="1066"/>
    <lineage>
        <taxon>Bacteria</taxon>
        <taxon>Pseudomonadati</taxon>
        <taxon>Pseudomonadota</taxon>
        <taxon>Betaproteobacteria</taxon>
        <taxon>Rhodocyclales</taxon>
        <taxon>Rhodocyclaceae</taxon>
        <taxon>Rhodocyclus</taxon>
    </lineage>
</organism>
<comment type="function">
    <text>Specific class of high-redox-potential 4Fe-4S ferredoxins. Functions in anaerobic electron transport in most purple and in some other photosynthetic bacteria and in at least one genus (Paracoccus) of halophilic, denitrifying bacteria.</text>
</comment>
<comment type="biophysicochemical properties">
    <redoxPotential>
        <text>E(0) is +330 mV.</text>
    </redoxPotential>
</comment>
<comment type="subunit">
    <text evidence="2">Homodimer.</text>
</comment>
<comment type="similarity">
    <text evidence="1">Belongs to the high-potential iron-sulfur protein (HiPIP) family.</text>
</comment>
<reference key="1">
    <citation type="journal article" date="1979" name="J. Biol. Chem.">
        <title>Primary structure of a high potential, four-iron-sulfur ferredoxin from the photosynthetic bacterium Rhodospirillum tenue.</title>
        <authorList>
            <person name="Tedro S.M."/>
            <person name="Meyer T.E."/>
            <person name="Kamen M.D."/>
        </authorList>
    </citation>
    <scope>PROTEIN SEQUENCE</scope>
    <source>
        <strain>DSM 3761</strain>
    </source>
</reference>
<accession>P00266</accession>